<comment type="function">
    <text evidence="1">Mitochondrial membrane ATP synthase (F(1)F(0) ATP synthase or Complex V) produces ATP from ADP in the presence of a proton gradient across the membrane which is generated by electron transport complexes of the respiratory chain. F-type ATPases consist of two structural domains, F(1) - containing the extramembraneous catalytic core and F(0) - containing the membrane proton channel, linked together by a central stalk and a peripheral stalk. During catalysis, ATP synthesis in the catalytic domain of F(1) is coupled via a rotary mechanism of the central stalk subunits to proton translocation. Key component of the proton channel; it may play a direct role in the translocation of protons across the membrane (By similarity).</text>
</comment>
<comment type="subunit">
    <text evidence="1">F-type ATPases have 2 components, CF(1) - the catalytic core - and CF(0) - the membrane proton channel. CF(1) has five subunits: alpha(3), beta(3), gamma(1), delta(1), epsilon(1). CF(0) has three main subunits: a, b and c (By similarity).</text>
</comment>
<comment type="subcellular location">
    <subcellularLocation>
        <location evidence="1">Mitochondrion inner membrane</location>
        <topology evidence="1">Multi-pass membrane protein</topology>
    </subcellularLocation>
</comment>
<comment type="similarity">
    <text evidence="3">Belongs to the ATPase A chain family.</text>
</comment>
<name>ATP6_DEBHA</name>
<organism>
    <name type="scientific">Debaryomyces hansenii (strain ATCC 36239 / CBS 767 / BCRC 21394 / JCM 1990 / NBRC 0083 / IGC 2968)</name>
    <name type="common">Yeast</name>
    <name type="synonym">Torulaspora hansenii</name>
    <dbReference type="NCBI Taxonomy" id="284592"/>
    <lineage>
        <taxon>Eukaryota</taxon>
        <taxon>Fungi</taxon>
        <taxon>Dikarya</taxon>
        <taxon>Ascomycota</taxon>
        <taxon>Saccharomycotina</taxon>
        <taxon>Pichiomycetes</taxon>
        <taxon>Debaryomycetaceae</taxon>
        <taxon>Debaryomyces</taxon>
    </lineage>
</organism>
<keyword id="KW-0066">ATP synthesis</keyword>
<keyword id="KW-0138">CF(0)</keyword>
<keyword id="KW-0375">Hydrogen ion transport</keyword>
<keyword id="KW-0406">Ion transport</keyword>
<keyword id="KW-0472">Membrane</keyword>
<keyword id="KW-0496">Mitochondrion</keyword>
<keyword id="KW-0999">Mitochondrion inner membrane</keyword>
<keyword id="KW-1185">Reference proteome</keyword>
<keyword id="KW-0812">Transmembrane</keyword>
<keyword id="KW-1133">Transmembrane helix</keyword>
<keyword id="KW-0813">Transport</keyword>
<sequence length="246" mass="27189">MIYSPTEQFEIKPLLTVNNMLTLSVNNYVMYVALVVTLMYSSVFLLNRTYLGFNRWGVALLAVYDTILNMVKSQMGARGGMYFPFMFTLFTFMLVANLVSMMPYSFAMSAQLVAIVSFSLSLWFGCVLMGLSKHGWGFFALFVPGGTPLALVPVLVLIETLSYSSRAISLGLRLSANVLSGHLLMLILGTLMFNLMGSSMLGFMGGFMPVMGVIAIVVTEFAIGMMQAYVFTILLSSYIKDSVYLH</sequence>
<reference key="1">
    <citation type="journal article" date="2008" name="FEMS Yeast Res.">
        <title>Promiscuous DNA in the nuclear genomes of hemiascomycetous yeasts.</title>
        <authorList>
            <person name="Sacerdot C."/>
            <person name="Casaregola S."/>
            <person name="Lafontaine I."/>
            <person name="Tekaia F."/>
            <person name="Dujon B."/>
            <person name="Ozier-Kalogeropoulos O."/>
        </authorList>
    </citation>
    <scope>NUCLEOTIDE SEQUENCE [LARGE SCALE GENOMIC DNA]</scope>
    <source>
        <strain>ATCC 36239 / CBS 767 / BCRC 21394 / JCM 1990 / NBRC 0083 / IGC 2968</strain>
    </source>
</reference>
<protein>
    <recommendedName>
        <fullName>ATP synthase subunit a</fullName>
    </recommendedName>
    <alternativeName>
        <fullName>ATP synthase subunit 6</fullName>
    </alternativeName>
    <alternativeName>
        <fullName>F-ATPase protein 6</fullName>
    </alternativeName>
</protein>
<accession>A9RAH2</accession>
<evidence type="ECO:0000250" key="1"/>
<evidence type="ECO:0000255" key="2"/>
<evidence type="ECO:0000305" key="3"/>
<dbReference type="EMBL" id="DQ508940">
    <property type="protein sequence ID" value="ABF58073.1"/>
    <property type="molecule type" value="Genomic_DNA"/>
</dbReference>
<dbReference type="RefSeq" id="YP_001621424.1">
    <property type="nucleotide sequence ID" value="NC_010166.1"/>
</dbReference>
<dbReference type="SMR" id="A9RAH2"/>
<dbReference type="FunCoup" id="A9RAH2">
    <property type="interactions" value="266"/>
</dbReference>
<dbReference type="STRING" id="284592.A9RAH2"/>
<dbReference type="GeneID" id="5845843"/>
<dbReference type="KEGG" id="dha:ATP6"/>
<dbReference type="InParanoid" id="A9RAH2"/>
<dbReference type="Proteomes" id="UP000000599">
    <property type="component" value="Mitochondrion"/>
</dbReference>
<dbReference type="GO" id="GO:0005743">
    <property type="term" value="C:mitochondrial inner membrane"/>
    <property type="evidence" value="ECO:0007669"/>
    <property type="project" value="UniProtKB-SubCell"/>
</dbReference>
<dbReference type="GO" id="GO:0045259">
    <property type="term" value="C:proton-transporting ATP synthase complex"/>
    <property type="evidence" value="ECO:0007669"/>
    <property type="project" value="UniProtKB-KW"/>
</dbReference>
<dbReference type="GO" id="GO:0046933">
    <property type="term" value="F:proton-transporting ATP synthase activity, rotational mechanism"/>
    <property type="evidence" value="ECO:0007669"/>
    <property type="project" value="TreeGrafter"/>
</dbReference>
<dbReference type="CDD" id="cd00310">
    <property type="entry name" value="ATP-synt_Fo_a_6"/>
    <property type="match status" value="1"/>
</dbReference>
<dbReference type="FunFam" id="1.20.120.220:FF:000003">
    <property type="entry name" value="ATP synthase subunit a"/>
    <property type="match status" value="1"/>
</dbReference>
<dbReference type="Gene3D" id="1.20.120.220">
    <property type="entry name" value="ATP synthase, F0 complex, subunit A"/>
    <property type="match status" value="1"/>
</dbReference>
<dbReference type="HAMAP" id="MF_01393">
    <property type="entry name" value="ATP_synth_a_bact"/>
    <property type="match status" value="1"/>
</dbReference>
<dbReference type="InterPro" id="IPR000568">
    <property type="entry name" value="ATP_synth_F0_asu"/>
</dbReference>
<dbReference type="InterPro" id="IPR023011">
    <property type="entry name" value="ATP_synth_F0_asu_AS"/>
</dbReference>
<dbReference type="InterPro" id="IPR045083">
    <property type="entry name" value="ATP_synth_F0_asu_bact/mt"/>
</dbReference>
<dbReference type="InterPro" id="IPR035908">
    <property type="entry name" value="F0_ATP_A_sf"/>
</dbReference>
<dbReference type="NCBIfam" id="TIGR01131">
    <property type="entry name" value="ATP_synt_6_or_A"/>
    <property type="match status" value="1"/>
</dbReference>
<dbReference type="PANTHER" id="PTHR11410">
    <property type="entry name" value="ATP SYNTHASE SUBUNIT A"/>
    <property type="match status" value="1"/>
</dbReference>
<dbReference type="PANTHER" id="PTHR11410:SF0">
    <property type="entry name" value="ATP SYNTHASE SUBUNIT A"/>
    <property type="match status" value="1"/>
</dbReference>
<dbReference type="Pfam" id="PF00119">
    <property type="entry name" value="ATP-synt_A"/>
    <property type="match status" value="1"/>
</dbReference>
<dbReference type="PRINTS" id="PR00123">
    <property type="entry name" value="ATPASEA"/>
</dbReference>
<dbReference type="SUPFAM" id="SSF81336">
    <property type="entry name" value="F1F0 ATP synthase subunit A"/>
    <property type="match status" value="1"/>
</dbReference>
<dbReference type="PROSITE" id="PS00449">
    <property type="entry name" value="ATPASE_A"/>
    <property type="match status" value="1"/>
</dbReference>
<gene>
    <name type="primary">ATP6</name>
</gene>
<proteinExistence type="inferred from homology"/>
<geneLocation type="mitochondrion"/>
<feature type="propeptide" id="PRO_0000355029" description="Removed in mature form" evidence="1">
    <location>
        <begin position="1"/>
        <end position="3"/>
    </location>
</feature>
<feature type="chain" id="PRO_0000355030" description="ATP synthase subunit a">
    <location>
        <begin position="4"/>
        <end position="246"/>
    </location>
</feature>
<feature type="transmembrane region" description="Helical" evidence="2">
    <location>
        <begin position="25"/>
        <end position="45"/>
    </location>
</feature>
<feature type="transmembrane region" description="Helical" evidence="2">
    <location>
        <begin position="51"/>
        <end position="71"/>
    </location>
</feature>
<feature type="transmembrane region" description="Helical" evidence="2">
    <location>
        <begin position="79"/>
        <end position="99"/>
    </location>
</feature>
<feature type="transmembrane region" description="Helical" evidence="2">
    <location>
        <begin position="112"/>
        <end position="132"/>
    </location>
</feature>
<feature type="transmembrane region" description="Helical" evidence="2">
    <location>
        <begin position="138"/>
        <end position="158"/>
    </location>
</feature>
<feature type="transmembrane region" description="Helical" evidence="2">
    <location>
        <begin position="178"/>
        <end position="198"/>
    </location>
</feature>
<feature type="transmembrane region" description="Helical" evidence="2">
    <location>
        <begin position="203"/>
        <end position="223"/>
    </location>
</feature>